<proteinExistence type="evidence at protein level"/>
<name>SOMA_HORSE</name>
<sequence length="216" mass="24423">MAAGPRTSVLLAFGLLCLPWPQDVGAFPAMPLSSLFANAVLRAQHLHQLAADTYKEFERAYIPEGQRYSIQNAQAAFCFSETIPAPTGKDEAQQRSDMELLRFSLLLIQSWLGPVQLLSRVFTNSLVFGTSDRVYEKLRDLEEGIQALMRELEDGSPRAGQILKQTYDKFDTNLRSDDALLKNYGLLSCFKKDLHKAETYLRVMKCRRFVESSCAF</sequence>
<dbReference type="EMBL" id="U02929">
    <property type="protein sequence ID" value="AAA21027.1"/>
    <property type="molecule type" value="mRNA"/>
</dbReference>
<dbReference type="PIR" id="A91772">
    <property type="entry name" value="STHO"/>
</dbReference>
<dbReference type="RefSeq" id="NP_001075417.1">
    <property type="nucleotide sequence ID" value="NM_001081948.1"/>
</dbReference>
<dbReference type="SMR" id="P01245"/>
<dbReference type="FunCoup" id="P01245">
    <property type="interactions" value="142"/>
</dbReference>
<dbReference type="STRING" id="9796.ENSECAP00000007142"/>
<dbReference type="PaxDb" id="9796-ENSECAP00000007142"/>
<dbReference type="GeneID" id="100034180"/>
<dbReference type="KEGG" id="ecb:100034180"/>
<dbReference type="CTD" id="2688"/>
<dbReference type="InParanoid" id="P01245"/>
<dbReference type="OrthoDB" id="9925773at2759"/>
<dbReference type="Proteomes" id="UP000002281">
    <property type="component" value="Unplaced"/>
</dbReference>
<dbReference type="GO" id="GO:0005615">
    <property type="term" value="C:extracellular space"/>
    <property type="evidence" value="ECO:0000318"/>
    <property type="project" value="GO_Central"/>
</dbReference>
<dbReference type="GO" id="GO:0008083">
    <property type="term" value="F:growth factor activity"/>
    <property type="evidence" value="ECO:0000318"/>
    <property type="project" value="GO_Central"/>
</dbReference>
<dbReference type="GO" id="GO:0005131">
    <property type="term" value="F:growth hormone receptor binding"/>
    <property type="evidence" value="ECO:0000318"/>
    <property type="project" value="GO_Central"/>
</dbReference>
<dbReference type="GO" id="GO:0005179">
    <property type="term" value="F:hormone activity"/>
    <property type="evidence" value="ECO:0000318"/>
    <property type="project" value="GO_Central"/>
</dbReference>
<dbReference type="GO" id="GO:0046872">
    <property type="term" value="F:metal ion binding"/>
    <property type="evidence" value="ECO:0007669"/>
    <property type="project" value="UniProtKB-KW"/>
</dbReference>
<dbReference type="GO" id="GO:0048513">
    <property type="term" value="P:animal organ development"/>
    <property type="evidence" value="ECO:0000318"/>
    <property type="project" value="GO_Central"/>
</dbReference>
<dbReference type="GO" id="GO:0060396">
    <property type="term" value="P:growth hormone receptor signaling pathway"/>
    <property type="evidence" value="ECO:0000318"/>
    <property type="project" value="GO_Central"/>
</dbReference>
<dbReference type="GO" id="GO:0046427">
    <property type="term" value="P:positive regulation of receptor signaling pathway via JAK-STAT"/>
    <property type="evidence" value="ECO:0000318"/>
    <property type="project" value="GO_Central"/>
</dbReference>
<dbReference type="GO" id="GO:0031667">
    <property type="term" value="P:response to nutrient levels"/>
    <property type="evidence" value="ECO:0000318"/>
    <property type="project" value="GO_Central"/>
</dbReference>
<dbReference type="CDD" id="cd10285">
    <property type="entry name" value="somatotropin_like"/>
    <property type="match status" value="1"/>
</dbReference>
<dbReference type="FunFam" id="1.20.1250.10:FF:000002">
    <property type="entry name" value="Growth hormone"/>
    <property type="match status" value="1"/>
</dbReference>
<dbReference type="Gene3D" id="1.20.1250.10">
    <property type="match status" value="1"/>
</dbReference>
<dbReference type="InterPro" id="IPR009079">
    <property type="entry name" value="4_helix_cytokine-like_core"/>
</dbReference>
<dbReference type="InterPro" id="IPR034975">
    <property type="entry name" value="Somatotropin"/>
</dbReference>
<dbReference type="InterPro" id="IPR001400">
    <property type="entry name" value="Somatotropin/Prolactin"/>
</dbReference>
<dbReference type="InterPro" id="IPR018116">
    <property type="entry name" value="Somatotropin_CS"/>
</dbReference>
<dbReference type="PANTHER" id="PTHR11417:SF2">
    <property type="entry name" value="SOMATOTROPIN"/>
    <property type="match status" value="1"/>
</dbReference>
<dbReference type="PANTHER" id="PTHR11417">
    <property type="entry name" value="SOMATOTROPIN,PROLACTIN"/>
    <property type="match status" value="1"/>
</dbReference>
<dbReference type="Pfam" id="PF00103">
    <property type="entry name" value="Hormone_1"/>
    <property type="match status" value="1"/>
</dbReference>
<dbReference type="PRINTS" id="PR00836">
    <property type="entry name" value="SOMATOTROPIN"/>
</dbReference>
<dbReference type="SUPFAM" id="SSF47266">
    <property type="entry name" value="4-helical cytokines"/>
    <property type="match status" value="1"/>
</dbReference>
<dbReference type="PROSITE" id="PS00266">
    <property type="entry name" value="SOMATOTROPIN_1"/>
    <property type="match status" value="1"/>
</dbReference>
<dbReference type="PROSITE" id="PS00338">
    <property type="entry name" value="SOMATOTROPIN_2"/>
    <property type="match status" value="1"/>
</dbReference>
<protein>
    <recommendedName>
        <fullName>Somatotropin</fullName>
    </recommendedName>
    <alternativeName>
        <fullName>Growth hormone</fullName>
    </alternativeName>
</protein>
<comment type="function">
    <text>Plays an important role in growth control. Its major role in stimulating body growth is to stimulate the liver and other tissues to secrete IGF1. It stimulates both the differentiation and proliferation of myoblasts. It also stimulates amino acid uptake and protein synthesis in muscle and other tissues.</text>
</comment>
<comment type="subcellular location">
    <subcellularLocation>
        <location>Secreted</location>
    </subcellularLocation>
</comment>
<comment type="similarity">
    <text evidence="4">Belongs to the somatotropin/prolactin family.</text>
</comment>
<keyword id="KW-0903">Direct protein sequencing</keyword>
<keyword id="KW-1015">Disulfide bond</keyword>
<keyword id="KW-0372">Hormone</keyword>
<keyword id="KW-0479">Metal-binding</keyword>
<keyword id="KW-0597">Phosphoprotein</keyword>
<keyword id="KW-1185">Reference proteome</keyword>
<keyword id="KW-0964">Secreted</keyword>
<keyword id="KW-0732">Signal</keyword>
<keyword id="KW-0862">Zinc</keyword>
<feature type="signal peptide" evidence="3">
    <location>
        <begin position="1"/>
        <end position="26"/>
    </location>
</feature>
<feature type="chain" id="PRO_0000032987" description="Somatotropin">
    <location>
        <begin position="27"/>
        <end position="216"/>
    </location>
</feature>
<feature type="binding site" evidence="1">
    <location>
        <position position="45"/>
    </location>
    <ligand>
        <name>Zn(2+)</name>
        <dbReference type="ChEBI" id="CHEBI:29105"/>
    </ligand>
</feature>
<feature type="binding site" evidence="1">
    <location>
        <position position="198"/>
    </location>
    <ligand>
        <name>Zn(2+)</name>
        <dbReference type="ChEBI" id="CHEBI:29105"/>
    </ligand>
</feature>
<feature type="modified residue" description="Phosphoserine" evidence="2">
    <location>
        <position position="131"/>
    </location>
</feature>
<feature type="disulfide bond">
    <location>
        <begin position="78"/>
        <end position="189"/>
    </location>
</feature>
<feature type="disulfide bond">
    <location>
        <begin position="206"/>
        <end position="214"/>
    </location>
</feature>
<organism>
    <name type="scientific">Equus caballus</name>
    <name type="common">Horse</name>
    <dbReference type="NCBI Taxonomy" id="9796"/>
    <lineage>
        <taxon>Eukaryota</taxon>
        <taxon>Metazoa</taxon>
        <taxon>Chordata</taxon>
        <taxon>Craniata</taxon>
        <taxon>Vertebrata</taxon>
        <taxon>Euteleostomi</taxon>
        <taxon>Mammalia</taxon>
        <taxon>Eutheria</taxon>
        <taxon>Laurasiatheria</taxon>
        <taxon>Perissodactyla</taxon>
        <taxon>Equidae</taxon>
        <taxon>Equus</taxon>
    </lineage>
</organism>
<evidence type="ECO:0000250" key="1"/>
<evidence type="ECO:0000250" key="2">
    <source>
        <dbReference type="UniProtKB" id="P01241"/>
    </source>
</evidence>
<evidence type="ECO:0000269" key="3">
    <source>
    </source>
</evidence>
<evidence type="ECO:0000305" key="4"/>
<gene>
    <name type="primary">GH1</name>
</gene>
<reference key="1">
    <citation type="journal article" date="1994" name="Gene">
        <title>Sequence of a cDNA encoding horse growth hormone.</title>
        <authorList>
            <person name="Ascacio-Martinez J.A."/>
            <person name="Barrera-Saldana H.A."/>
        </authorList>
    </citation>
    <scope>NUCLEOTIDE SEQUENCE [MRNA]</scope>
    <source>
        <tissue>Pituitary</tissue>
    </source>
</reference>
<reference key="2">
    <citation type="journal article" date="1976" name="Int. J. Pept. Protein Res.">
        <title>Primary structure of equine growth hormone.</title>
        <authorList>
            <person name="Zakin M.M."/>
            <person name="Poskus E."/>
            <person name="Langton A.A."/>
            <person name="Ferrara P."/>
            <person name="Santome J.A."/>
            <person name="Dellacha J.M."/>
            <person name="Paladini A.C."/>
        </authorList>
    </citation>
    <scope>PROTEIN SEQUENCE OF 27-216</scope>
</reference>
<reference key="3">
    <citation type="journal article" date="1973" name="FEBS Lett.">
        <title>The amino acid sequence of equine growth hormone.</title>
        <authorList>
            <person name="Zakin M.M."/>
            <person name="Poskus E."/>
            <person name="Dellacha J.M."/>
            <person name="Paladini A.C."/>
            <person name="Santome J.A."/>
        </authorList>
    </citation>
    <scope>PRELIMINARY PROTEIN SEQUENCE OF 27-216</scope>
</reference>
<reference key="4">
    <citation type="journal article" date="1972" name="FEBS Lett.">
        <title>Amino acid sequences around the cystine residues in equine growth hormone.</title>
        <authorList>
            <person name="Zakin M.M."/>
            <person name="Poskus E."/>
            <person name="Dellacha J.M."/>
            <person name="Paladini A.C."/>
            <person name="Santome J.A."/>
        </authorList>
    </citation>
    <scope>PROTEIN SEQUENCE OF 68-95 AND 183-216</scope>
</reference>
<reference key="5">
    <citation type="journal article" date="1968" name="Biochem. J.">
        <title>Amino acid sequences around the cystine residues in horse growth hormone.</title>
        <authorList>
            <person name="Oliver L."/>
            <person name="Hartree A.S."/>
        </authorList>
    </citation>
    <scope>PROTEIN SEQUENCE OF 202-216</scope>
</reference>
<accession>P01245</accession>